<name>SNPC3_RAT</name>
<gene>
    <name type="primary">Snapc3</name>
</gene>
<dbReference type="EMBL" id="BC091186">
    <property type="protein sequence ID" value="AAH91186.1"/>
    <property type="molecule type" value="mRNA"/>
</dbReference>
<dbReference type="RefSeq" id="NP_001013230.1">
    <property type="nucleotide sequence ID" value="NM_001013212.1"/>
</dbReference>
<dbReference type="SMR" id="Q5BK68"/>
<dbReference type="FunCoup" id="Q5BK68">
    <property type="interactions" value="3938"/>
</dbReference>
<dbReference type="STRING" id="10116.ENSRNOP00000015254"/>
<dbReference type="PhosphoSitePlus" id="Q5BK68"/>
<dbReference type="PaxDb" id="10116-ENSRNOP00000015254"/>
<dbReference type="Ensembl" id="ENSRNOT00000015254.7">
    <property type="protein sequence ID" value="ENSRNOP00000015254.4"/>
    <property type="gene ID" value="ENSRNOG00000010825.7"/>
</dbReference>
<dbReference type="GeneID" id="362537"/>
<dbReference type="KEGG" id="rno:362537"/>
<dbReference type="UCSC" id="RGD:1305172">
    <property type="organism name" value="rat"/>
</dbReference>
<dbReference type="AGR" id="RGD:1305172"/>
<dbReference type="CTD" id="6619"/>
<dbReference type="RGD" id="1305172">
    <property type="gene designation" value="Snapc3"/>
</dbReference>
<dbReference type="eggNOG" id="KOG2664">
    <property type="taxonomic scope" value="Eukaryota"/>
</dbReference>
<dbReference type="GeneTree" id="ENSGT00390000005708"/>
<dbReference type="HOGENOM" id="CLU_041861_0_1_1"/>
<dbReference type="InParanoid" id="Q5BK68"/>
<dbReference type="OMA" id="AHRDDCL"/>
<dbReference type="OrthoDB" id="46583at2759"/>
<dbReference type="PhylomeDB" id="Q5BK68"/>
<dbReference type="TreeFam" id="TF317705"/>
<dbReference type="Reactome" id="R-RNO-6807505">
    <property type="pathway name" value="RNA polymerase II transcribes snRNA genes"/>
</dbReference>
<dbReference type="Reactome" id="R-RNO-76071">
    <property type="pathway name" value="RNA Polymerase III Transcription Initiation From Type 3 Promoter"/>
</dbReference>
<dbReference type="PRO" id="PR:Q5BK68"/>
<dbReference type="Proteomes" id="UP000002494">
    <property type="component" value="Chromosome 5"/>
</dbReference>
<dbReference type="Bgee" id="ENSRNOG00000010825">
    <property type="expression patterns" value="Expressed in ovary and 19 other cell types or tissues"/>
</dbReference>
<dbReference type="GO" id="GO:0005634">
    <property type="term" value="C:nucleus"/>
    <property type="evidence" value="ECO:0007669"/>
    <property type="project" value="UniProtKB-SubCell"/>
</dbReference>
<dbReference type="GO" id="GO:0019185">
    <property type="term" value="C:snRNA-activating protein complex"/>
    <property type="evidence" value="ECO:0000318"/>
    <property type="project" value="GO_Central"/>
</dbReference>
<dbReference type="GO" id="GO:0003681">
    <property type="term" value="F:bent DNA binding"/>
    <property type="evidence" value="ECO:0000318"/>
    <property type="project" value="GO_Central"/>
</dbReference>
<dbReference type="GO" id="GO:0001006">
    <property type="term" value="F:RNA polymerase III type 3 promoter sequence-specific DNA binding"/>
    <property type="evidence" value="ECO:0000318"/>
    <property type="project" value="GO_Central"/>
</dbReference>
<dbReference type="GO" id="GO:0042795">
    <property type="term" value="P:snRNA transcription by RNA polymerase II"/>
    <property type="evidence" value="ECO:0000318"/>
    <property type="project" value="GO_Central"/>
</dbReference>
<dbReference type="GO" id="GO:0042796">
    <property type="term" value="P:snRNA transcription by RNA polymerase III"/>
    <property type="evidence" value="ECO:0000318"/>
    <property type="project" value="GO_Central"/>
</dbReference>
<dbReference type="InterPro" id="IPR022042">
    <property type="entry name" value="snRNA-activating_su3"/>
</dbReference>
<dbReference type="PANTHER" id="PTHR13421">
    <property type="entry name" value="SNRNA-ACTIVATING PROTEIN COMPLEX SUBUNIT 3"/>
    <property type="match status" value="1"/>
</dbReference>
<dbReference type="PANTHER" id="PTHR13421:SF16">
    <property type="entry name" value="SNRNA-ACTIVATING PROTEIN COMPLEX SUBUNIT 3"/>
    <property type="match status" value="1"/>
</dbReference>
<dbReference type="Pfam" id="PF12251">
    <property type="entry name" value="SNAPC3"/>
    <property type="match status" value="1"/>
</dbReference>
<comment type="function">
    <text evidence="1">Part of the SNAPc complex required for the transcription of both RNA polymerase II and III small-nuclear RNA genes. Binds to the proximal sequence element (PSE), a non-TATA-box basal promoter element common to these 2 types of genes. Recruits TBP and BRF2 to the U6 snRNA TATA box (By similarity).</text>
</comment>
<comment type="subunit">
    <text evidence="1">Part of the SNAPc complex composed of 5 subunits: SNAPC1, SNAPC2, SNAPC3, SNAPC4 and SNAPC5. SNAPC3 interacts with SNAPC1 (By similarity).</text>
</comment>
<comment type="subcellular location">
    <subcellularLocation>
        <location evidence="1">Nucleus</location>
    </subcellularLocation>
</comment>
<comment type="similarity">
    <text evidence="3">Belongs to the SNAPC3/SRD2 family.</text>
</comment>
<protein>
    <recommendedName>
        <fullName>snRNA-activating protein complex subunit 3</fullName>
        <shortName>SNAPc subunit 3</shortName>
    </recommendedName>
    <alternativeName>
        <fullName>Small nuclear RNA-activating complex polypeptide 3</fullName>
    </alternativeName>
</protein>
<reference key="1">
    <citation type="journal article" date="2004" name="Genome Res.">
        <title>The status, quality, and expansion of the NIH full-length cDNA project: the Mammalian Gene Collection (MGC).</title>
        <authorList>
            <consortium name="The MGC Project Team"/>
        </authorList>
    </citation>
    <scope>NUCLEOTIDE SEQUENCE [LARGE SCALE MRNA]</scope>
    <source>
        <tissue>Spleen</tissue>
    </source>
</reference>
<sequence length="407" mass="46230">MAEDPQGGGAGGPQHPVPSGSHSSFPEYELPELHTRVFHVGAFGELWRGRLGAQDLSLNEPQAAAQPTDGEASNNGFEDAAVAEDLGCSLEAAAELRVVCGLDKLRCLGEDEDPEVIPENTDLVTLCVRKGLLDYREENITIDRACRQETFAYEMESHALGKKPENPADMIEEGESILSVNILYPVIFNKHREHKPYQTVLVLGSQKLTELRDSICCVSDLQIGGEFSNAPDQAPEHISKDLYKSAFFYFEGTFYNDKRYPECRDLSRTIIEWSESHDRGYGKFQTARMEDFTFNDLNIKLGFPYLYCHQGDCEHVVVITDIRLVHHDDCLDRTLYPLLTKKHWLWTRKCFVCKMYTARWVTNNDTFAPEDPCFFCDVCFRMLHYDSEGNKLGEFLAYPYVDPGTFN</sequence>
<keyword id="KW-0238">DNA-binding</keyword>
<keyword id="KW-0539">Nucleus</keyword>
<keyword id="KW-1185">Reference proteome</keyword>
<keyword id="KW-0804">Transcription</keyword>
<keyword id="KW-0805">Transcription regulation</keyword>
<accession>Q5BK68</accession>
<feature type="chain" id="PRO_0000072027" description="snRNA-activating protein complex subunit 3">
    <location>
        <begin position="1"/>
        <end position="407"/>
    </location>
</feature>
<feature type="region of interest" description="Disordered" evidence="2">
    <location>
        <begin position="1"/>
        <end position="26"/>
    </location>
</feature>
<feature type="compositionally biased region" description="Gly residues" evidence="2">
    <location>
        <begin position="1"/>
        <end position="12"/>
    </location>
</feature>
<evidence type="ECO:0000250" key="1"/>
<evidence type="ECO:0000256" key="2">
    <source>
        <dbReference type="SAM" id="MobiDB-lite"/>
    </source>
</evidence>
<evidence type="ECO:0000305" key="3"/>
<proteinExistence type="evidence at transcript level"/>
<organism>
    <name type="scientific">Rattus norvegicus</name>
    <name type="common">Rat</name>
    <dbReference type="NCBI Taxonomy" id="10116"/>
    <lineage>
        <taxon>Eukaryota</taxon>
        <taxon>Metazoa</taxon>
        <taxon>Chordata</taxon>
        <taxon>Craniata</taxon>
        <taxon>Vertebrata</taxon>
        <taxon>Euteleostomi</taxon>
        <taxon>Mammalia</taxon>
        <taxon>Eutheria</taxon>
        <taxon>Euarchontoglires</taxon>
        <taxon>Glires</taxon>
        <taxon>Rodentia</taxon>
        <taxon>Myomorpha</taxon>
        <taxon>Muroidea</taxon>
        <taxon>Muridae</taxon>
        <taxon>Murinae</taxon>
        <taxon>Rattus</taxon>
    </lineage>
</organism>